<comment type="function">
    <text evidence="1">Has antimicrobial, insecticidal, cytolytic and cytotoxic activity.</text>
</comment>
<comment type="subcellular location">
    <subcellularLocation>
        <location evidence="2">Secreted</location>
    </subcellularLocation>
</comment>
<comment type="tissue specificity">
    <text evidence="7">Expressed by the venom gland.</text>
</comment>
<comment type="domain">
    <text evidence="1">The presence of a 'disulfide through disulfide knot' structurally defines this protein as a knottin.</text>
</comment>
<comment type="domain">
    <text evidence="1">The N-terminal part of the mature protein (59-105) probably forms an alpha-helix which acts as a membrane-active peptide. It is necessary and sufficient for the toxin's antimicrobial, insecticidal, cytolytic and cytotoxic activity.</text>
</comment>
<comment type="similarity">
    <text evidence="6">Belongs to the spiderine family. Cationic/spiderine subfamily.</text>
</comment>
<proteinExistence type="evidence at transcript level"/>
<reference key="1">
    <citation type="journal article" date="2013" name="FEBS J.">
        <title>Spider toxins comprising disulfide-rich and linear amphipathic domains: A new class of molecules identified in the lynx spider Oxyopes takobius.</title>
        <authorList>
            <person name="Vassilevski A.A."/>
            <person name="Sachkova M.Y."/>
            <person name="Ignatova A.A."/>
            <person name="Kozlov S.A."/>
            <person name="Feofanov A.V."/>
            <person name="Grishin E.V."/>
        </authorList>
    </citation>
    <scope>NUCLEOTIDE SEQUENCE [MRNA]</scope>
    <source>
        <tissue>Venom gland</tissue>
    </source>
</reference>
<dbReference type="EMBL" id="JX134897">
    <property type="protein sequence ID" value="AGG39776.1"/>
    <property type="molecule type" value="mRNA"/>
</dbReference>
<dbReference type="SMR" id="P86719"/>
<dbReference type="ArachnoServer" id="AS001889">
    <property type="toxin name" value="M-oxotoxin-Ot3k"/>
</dbReference>
<dbReference type="GO" id="GO:0005576">
    <property type="term" value="C:extracellular region"/>
    <property type="evidence" value="ECO:0007669"/>
    <property type="project" value="UniProtKB-SubCell"/>
</dbReference>
<dbReference type="GO" id="GO:0090729">
    <property type="term" value="F:toxin activity"/>
    <property type="evidence" value="ECO:0007669"/>
    <property type="project" value="UniProtKB-KW"/>
</dbReference>
<dbReference type="GO" id="GO:0042742">
    <property type="term" value="P:defense response to bacterium"/>
    <property type="evidence" value="ECO:0007669"/>
    <property type="project" value="UniProtKB-KW"/>
</dbReference>
<dbReference type="GO" id="GO:0031640">
    <property type="term" value="P:killing of cells of another organism"/>
    <property type="evidence" value="ECO:0007669"/>
    <property type="project" value="UniProtKB-KW"/>
</dbReference>
<dbReference type="InterPro" id="IPR044061">
    <property type="entry name" value="OXYTX_ICK"/>
</dbReference>
<dbReference type="PROSITE" id="PS51861">
    <property type="entry name" value="OXYTX_ICK"/>
    <property type="match status" value="1"/>
</dbReference>
<accession>P86719</accession>
<accession>S4TYZ4</accession>
<name>SPN2B_OXYTA</name>
<sequence>MKFALVLLGFCAFYLVNATGDLETELEASDLQELQEALDLIAETPLESLEAEELEEARKFKFPKINWGKLASKAKDVYKKGQKLAKNKNVKKALKYGKQLAENLAAGEVHEPGTPVGNNKCWAIGTRCTDDCDCCPEHHCHCPAKSWTFGLIPCSCQVTESDKVNKCPPAE</sequence>
<keyword id="KW-0044">Antibiotic</keyword>
<keyword id="KW-0929">Antimicrobial</keyword>
<keyword id="KW-0204">Cytolysis</keyword>
<keyword id="KW-1015">Disulfide bond</keyword>
<keyword id="KW-0960">Knottin</keyword>
<keyword id="KW-0964">Secreted</keyword>
<keyword id="KW-0732">Signal</keyword>
<keyword id="KW-0800">Toxin</keyword>
<feature type="signal peptide" evidence="3">
    <location>
        <begin position="1"/>
        <end position="18"/>
    </location>
</feature>
<feature type="propeptide" id="PRO_0000425698" description="Removed in mature form" evidence="2">
    <location>
        <begin position="19"/>
        <end position="58"/>
    </location>
</feature>
<feature type="chain" id="PRO_0000425699" description="Spiderine-2b" evidence="2">
    <location>
        <begin position="59"/>
        <end position="171"/>
    </location>
</feature>
<feature type="domain" description="Oxytoxin-type inhibitor cystine knot (ICK)" evidence="4">
    <location>
        <begin position="118"/>
        <end position="171"/>
    </location>
</feature>
<feature type="region of interest" description="Linear cationic cytotoxin domain" evidence="1">
    <location>
        <begin position="59"/>
        <end position="104"/>
    </location>
</feature>
<feature type="disulfide bond" evidence="1">
    <location>
        <begin position="121"/>
        <end position="135"/>
    </location>
</feature>
<feature type="disulfide bond" evidence="1">
    <location>
        <begin position="128"/>
        <end position="140"/>
    </location>
</feature>
<feature type="disulfide bond" evidence="1">
    <location>
        <begin position="132"/>
        <end position="167"/>
    </location>
</feature>
<feature type="disulfide bond" evidence="1">
    <location>
        <begin position="134"/>
        <end position="156"/>
    </location>
</feature>
<feature type="disulfide bond" evidence="1">
    <location>
        <begin position="142"/>
        <end position="154"/>
    </location>
</feature>
<organism>
    <name type="scientific">Oxyopes takobius</name>
    <name type="common">Lynx spider</name>
    <name type="synonym">Oxyopes foliiformis</name>
    <dbReference type="NCBI Taxonomy" id="666126"/>
    <lineage>
        <taxon>Eukaryota</taxon>
        <taxon>Metazoa</taxon>
        <taxon>Ecdysozoa</taxon>
        <taxon>Arthropoda</taxon>
        <taxon>Chelicerata</taxon>
        <taxon>Arachnida</taxon>
        <taxon>Araneae</taxon>
        <taxon>Araneomorphae</taxon>
        <taxon>Entelegynae</taxon>
        <taxon>Lycosoidea</taxon>
        <taxon>Oxyopidae</taxon>
        <taxon>Oxyopes</taxon>
    </lineage>
</organism>
<evidence type="ECO:0000250" key="1">
    <source>
        <dbReference type="UniProtKB" id="P86716"/>
    </source>
</evidence>
<evidence type="ECO:0000250" key="2">
    <source>
        <dbReference type="UniProtKB" id="P86718"/>
    </source>
</evidence>
<evidence type="ECO:0000255" key="3"/>
<evidence type="ECO:0000255" key="4">
    <source>
        <dbReference type="PROSITE-ProRule" id="PRU01208"/>
    </source>
</evidence>
<evidence type="ECO:0000303" key="5">
    <source>
    </source>
</evidence>
<evidence type="ECO:0000305" key="6"/>
<evidence type="ECO:0000305" key="7">
    <source>
    </source>
</evidence>
<protein>
    <recommendedName>
        <fullName evidence="5">Spiderine-2b</fullName>
    </recommendedName>
    <alternativeName>
        <fullName evidence="6">M-oxotoxin-Ot3k</fullName>
        <shortName evidence="6">M-OXTX-Ot3k</shortName>
    </alternativeName>
    <alternativeName>
        <fullName evidence="5">OtTx2b</fullName>
    </alternativeName>
</protein>